<feature type="chain" id="PRO_0000051898" description="Cytochrome P450 6B6">
    <location>
        <begin position="1"/>
        <end position="504"/>
    </location>
</feature>
<feature type="binding site" description="axial binding residue" evidence="1">
    <location>
        <position position="445"/>
    </location>
    <ligand>
        <name>heme</name>
        <dbReference type="ChEBI" id="CHEBI:30413"/>
    </ligand>
    <ligandPart>
        <name>Fe</name>
        <dbReference type="ChEBI" id="CHEBI:18248"/>
    </ligandPart>
</feature>
<organism>
    <name type="scientific">Helicoverpa armigera</name>
    <name type="common">Cotton bollworm</name>
    <name type="synonym">Heliothis armigera</name>
    <dbReference type="NCBI Taxonomy" id="29058"/>
    <lineage>
        <taxon>Eukaryota</taxon>
        <taxon>Metazoa</taxon>
        <taxon>Ecdysozoa</taxon>
        <taxon>Arthropoda</taxon>
        <taxon>Hexapoda</taxon>
        <taxon>Insecta</taxon>
        <taxon>Pterygota</taxon>
        <taxon>Neoptera</taxon>
        <taxon>Endopterygota</taxon>
        <taxon>Lepidoptera</taxon>
        <taxon>Glossata</taxon>
        <taxon>Ditrysia</taxon>
        <taxon>Noctuoidea</taxon>
        <taxon>Noctuidae</taxon>
        <taxon>Heliothinae</taxon>
        <taxon>Helicoverpa</taxon>
    </lineage>
</organism>
<proteinExistence type="evidence at transcript level"/>
<accession>Q95031</accession>
<dbReference type="EC" id="1.14.14.1"/>
<dbReference type="EMBL" id="U64800">
    <property type="protein sequence ID" value="AAB06441.1"/>
    <property type="molecule type" value="mRNA"/>
</dbReference>
<dbReference type="SMR" id="Q95031"/>
<dbReference type="OrthoDB" id="2789670at2759"/>
<dbReference type="GO" id="GO:0005789">
    <property type="term" value="C:endoplasmic reticulum membrane"/>
    <property type="evidence" value="ECO:0007669"/>
    <property type="project" value="UniProtKB-SubCell"/>
</dbReference>
<dbReference type="GO" id="GO:0020037">
    <property type="term" value="F:heme binding"/>
    <property type="evidence" value="ECO:0007669"/>
    <property type="project" value="InterPro"/>
</dbReference>
<dbReference type="GO" id="GO:0005506">
    <property type="term" value="F:iron ion binding"/>
    <property type="evidence" value="ECO:0007669"/>
    <property type="project" value="InterPro"/>
</dbReference>
<dbReference type="GO" id="GO:0016712">
    <property type="term" value="F:oxidoreductase activity, acting on paired donors, with incorporation or reduction of molecular oxygen, reduced flavin or flavoprotein as one donor, and incorporation of one atom of oxygen"/>
    <property type="evidence" value="ECO:0007669"/>
    <property type="project" value="UniProtKB-EC"/>
</dbReference>
<dbReference type="CDD" id="cd11056">
    <property type="entry name" value="CYP6-like"/>
    <property type="match status" value="1"/>
</dbReference>
<dbReference type="FunFam" id="1.10.630.10:FF:000042">
    <property type="entry name" value="Cytochrome P450"/>
    <property type="match status" value="1"/>
</dbReference>
<dbReference type="Gene3D" id="1.10.630.10">
    <property type="entry name" value="Cytochrome P450"/>
    <property type="match status" value="1"/>
</dbReference>
<dbReference type="InterPro" id="IPR001128">
    <property type="entry name" value="Cyt_P450"/>
</dbReference>
<dbReference type="InterPro" id="IPR017972">
    <property type="entry name" value="Cyt_P450_CS"/>
</dbReference>
<dbReference type="InterPro" id="IPR002401">
    <property type="entry name" value="Cyt_P450_E_grp-I"/>
</dbReference>
<dbReference type="InterPro" id="IPR036396">
    <property type="entry name" value="Cyt_P450_sf"/>
</dbReference>
<dbReference type="InterPro" id="IPR050476">
    <property type="entry name" value="Insect_CytP450_Detox"/>
</dbReference>
<dbReference type="PANTHER" id="PTHR24292">
    <property type="entry name" value="CYTOCHROME P450"/>
    <property type="match status" value="1"/>
</dbReference>
<dbReference type="PANTHER" id="PTHR24292:SF100">
    <property type="entry name" value="CYTOCHROME P450 6A16, ISOFORM B-RELATED"/>
    <property type="match status" value="1"/>
</dbReference>
<dbReference type="Pfam" id="PF00067">
    <property type="entry name" value="p450"/>
    <property type="match status" value="1"/>
</dbReference>
<dbReference type="PRINTS" id="PR00463">
    <property type="entry name" value="EP450I"/>
</dbReference>
<dbReference type="PRINTS" id="PR00385">
    <property type="entry name" value="P450"/>
</dbReference>
<dbReference type="SUPFAM" id="SSF48264">
    <property type="entry name" value="Cytochrome P450"/>
    <property type="match status" value="1"/>
</dbReference>
<dbReference type="PROSITE" id="PS00086">
    <property type="entry name" value="CYTOCHROME_P450"/>
    <property type="match status" value="1"/>
</dbReference>
<gene>
    <name type="primary">CYP6B6</name>
</gene>
<evidence type="ECO:0000250" key="1"/>
<evidence type="ECO:0000305" key="2"/>
<reference key="1">
    <citation type="journal article" date="1998" name="Insect Biochem. Mol. Biol.">
        <title>Isolation and characterization of two cytochrome P450 cDNA clones for CYP6B6 and CYP6B7 from Helicoverpa armigera (Hubner): possible involvement of CYP6B7 in pyrethroid resistance.</title>
        <authorList>
            <person name="Ranasinghe C."/>
            <person name="Hobbs A.A."/>
        </authorList>
    </citation>
    <scope>NUCLEOTIDE SEQUENCE [MRNA]</scope>
</reference>
<name>CP6B6_HELAM</name>
<comment type="catalytic activity">
    <reaction>
        <text>an organic molecule + reduced [NADPH--hemoprotein reductase] + O2 = an alcohol + oxidized [NADPH--hemoprotein reductase] + H2O + H(+)</text>
        <dbReference type="Rhea" id="RHEA:17149"/>
        <dbReference type="Rhea" id="RHEA-COMP:11964"/>
        <dbReference type="Rhea" id="RHEA-COMP:11965"/>
        <dbReference type="ChEBI" id="CHEBI:15377"/>
        <dbReference type="ChEBI" id="CHEBI:15378"/>
        <dbReference type="ChEBI" id="CHEBI:15379"/>
        <dbReference type="ChEBI" id="CHEBI:30879"/>
        <dbReference type="ChEBI" id="CHEBI:57618"/>
        <dbReference type="ChEBI" id="CHEBI:58210"/>
        <dbReference type="ChEBI" id="CHEBI:142491"/>
        <dbReference type="EC" id="1.14.14.1"/>
    </reaction>
</comment>
<comment type="cofactor">
    <cofactor evidence="1">
        <name>heme</name>
        <dbReference type="ChEBI" id="CHEBI:30413"/>
    </cofactor>
</comment>
<comment type="subcellular location">
    <subcellularLocation>
        <location evidence="2">Endoplasmic reticulum membrane</location>
        <topology evidence="2">Peripheral membrane protein</topology>
    </subcellularLocation>
    <subcellularLocation>
        <location evidence="2">Microsome membrane</location>
        <topology evidence="2">Peripheral membrane protein</topology>
    </subcellularLocation>
</comment>
<comment type="similarity">
    <text evidence="2">Belongs to the cytochrome P450 family.</text>
</comment>
<sequence length="504" mass="57602">MWIFYFPAVISVLIVSLYFYFTRTFNYWKKRNVRGPEPTVFFGNLKDSALPRKNMGVVMEELYNMFPEEKVIGIYRMTSPCLLVRDLEVIKHIMIKDFEVFSDRGVEFSKEGLGSNLFHADGETWRALRNRFTPIFTSGKPKNMFYLMHEGADNFIDHVSAECEKNQEFEVHSLLQTYTMSTIAACAFGISYDSIGDKVKALDIVDKIISEPSYAIELDMMYPGLLSKLNLSIFPTAVKNFFKSLVDNIVAQRNGKPSGRNDFMDLILELRQLGEVTSNKYGSSASSLEITDEVICAQAFVFYIAGYETSATTMAYMIYQLALSPDIQNKLIAEVDEVLKANDGKVTYDTVKEMKYMNKAFDETLRMYSIVEPLQRKATRDYKIPGTDVVIEKDTIVLISPRGIHYDPKYYDNPKQFNPDRFDAEEVGKRHPCAYLPFGLGQRNCIGMRFGRLQSLLCITKILSKFRIEPSKNTDRNLQVEPHRGLIGPKGGIRVNVVPRKLVS</sequence>
<protein>
    <recommendedName>
        <fullName>Cytochrome P450 6B6</fullName>
        <ecNumber>1.14.14.1</ecNumber>
    </recommendedName>
    <alternativeName>
        <fullName>CYPVIB6</fullName>
    </alternativeName>
</protein>
<keyword id="KW-0256">Endoplasmic reticulum</keyword>
<keyword id="KW-0349">Heme</keyword>
<keyword id="KW-0408">Iron</keyword>
<keyword id="KW-0472">Membrane</keyword>
<keyword id="KW-0479">Metal-binding</keyword>
<keyword id="KW-0492">Microsome</keyword>
<keyword id="KW-0503">Monooxygenase</keyword>
<keyword id="KW-0560">Oxidoreductase</keyword>